<dbReference type="EC" id="1.17.1.8" evidence="1"/>
<dbReference type="EMBL" id="CP000941">
    <property type="protein sequence ID" value="ACA11461.1"/>
    <property type="molecule type" value="Genomic_DNA"/>
</dbReference>
<dbReference type="RefSeq" id="WP_012337670.1">
    <property type="nucleotide sequence ID" value="NC_010513.1"/>
</dbReference>
<dbReference type="SMR" id="B0U565"/>
<dbReference type="KEGG" id="xfm:Xfasm12_0450"/>
<dbReference type="HOGENOM" id="CLU_047479_2_2_6"/>
<dbReference type="UniPathway" id="UPA00034">
    <property type="reaction ID" value="UER00018"/>
</dbReference>
<dbReference type="GO" id="GO:0005829">
    <property type="term" value="C:cytosol"/>
    <property type="evidence" value="ECO:0007669"/>
    <property type="project" value="TreeGrafter"/>
</dbReference>
<dbReference type="GO" id="GO:0008839">
    <property type="term" value="F:4-hydroxy-tetrahydrodipicolinate reductase"/>
    <property type="evidence" value="ECO:0007669"/>
    <property type="project" value="UniProtKB-EC"/>
</dbReference>
<dbReference type="GO" id="GO:0051287">
    <property type="term" value="F:NAD binding"/>
    <property type="evidence" value="ECO:0007669"/>
    <property type="project" value="UniProtKB-UniRule"/>
</dbReference>
<dbReference type="GO" id="GO:0050661">
    <property type="term" value="F:NADP binding"/>
    <property type="evidence" value="ECO:0007669"/>
    <property type="project" value="UniProtKB-UniRule"/>
</dbReference>
<dbReference type="GO" id="GO:0016726">
    <property type="term" value="F:oxidoreductase activity, acting on CH or CH2 groups, NAD or NADP as acceptor"/>
    <property type="evidence" value="ECO:0007669"/>
    <property type="project" value="UniProtKB-UniRule"/>
</dbReference>
<dbReference type="GO" id="GO:0019877">
    <property type="term" value="P:diaminopimelate biosynthetic process"/>
    <property type="evidence" value="ECO:0007669"/>
    <property type="project" value="UniProtKB-UniRule"/>
</dbReference>
<dbReference type="GO" id="GO:0009089">
    <property type="term" value="P:lysine biosynthetic process via diaminopimelate"/>
    <property type="evidence" value="ECO:0007669"/>
    <property type="project" value="UniProtKB-UniRule"/>
</dbReference>
<dbReference type="CDD" id="cd02274">
    <property type="entry name" value="DHDPR_N"/>
    <property type="match status" value="1"/>
</dbReference>
<dbReference type="Gene3D" id="3.30.360.10">
    <property type="entry name" value="Dihydrodipicolinate Reductase, domain 2"/>
    <property type="match status" value="1"/>
</dbReference>
<dbReference type="Gene3D" id="3.40.50.720">
    <property type="entry name" value="NAD(P)-binding Rossmann-like Domain"/>
    <property type="match status" value="1"/>
</dbReference>
<dbReference type="HAMAP" id="MF_00102">
    <property type="entry name" value="DapB"/>
    <property type="match status" value="1"/>
</dbReference>
<dbReference type="InterPro" id="IPR022663">
    <property type="entry name" value="DapB_C"/>
</dbReference>
<dbReference type="InterPro" id="IPR000846">
    <property type="entry name" value="DapB_N"/>
</dbReference>
<dbReference type="InterPro" id="IPR022664">
    <property type="entry name" value="DapB_N_CS"/>
</dbReference>
<dbReference type="InterPro" id="IPR023940">
    <property type="entry name" value="DHDPR_bac"/>
</dbReference>
<dbReference type="InterPro" id="IPR036291">
    <property type="entry name" value="NAD(P)-bd_dom_sf"/>
</dbReference>
<dbReference type="PANTHER" id="PTHR20836:SF0">
    <property type="entry name" value="4-HYDROXY-TETRAHYDRODIPICOLINATE REDUCTASE 1, CHLOROPLASTIC-RELATED"/>
    <property type="match status" value="1"/>
</dbReference>
<dbReference type="PANTHER" id="PTHR20836">
    <property type="entry name" value="DIHYDRODIPICOLINATE REDUCTASE"/>
    <property type="match status" value="1"/>
</dbReference>
<dbReference type="Pfam" id="PF05173">
    <property type="entry name" value="DapB_C"/>
    <property type="match status" value="1"/>
</dbReference>
<dbReference type="Pfam" id="PF01113">
    <property type="entry name" value="DapB_N"/>
    <property type="match status" value="1"/>
</dbReference>
<dbReference type="PIRSF" id="PIRSF000161">
    <property type="entry name" value="DHPR"/>
    <property type="match status" value="1"/>
</dbReference>
<dbReference type="SUPFAM" id="SSF55347">
    <property type="entry name" value="Glyceraldehyde-3-phosphate dehydrogenase-like, C-terminal domain"/>
    <property type="match status" value="1"/>
</dbReference>
<dbReference type="SUPFAM" id="SSF51735">
    <property type="entry name" value="NAD(P)-binding Rossmann-fold domains"/>
    <property type="match status" value="1"/>
</dbReference>
<dbReference type="PROSITE" id="PS01298">
    <property type="entry name" value="DAPB"/>
    <property type="match status" value="1"/>
</dbReference>
<evidence type="ECO:0000255" key="1">
    <source>
        <dbReference type="HAMAP-Rule" id="MF_00102"/>
    </source>
</evidence>
<evidence type="ECO:0000305" key="2"/>
<feature type="chain" id="PRO_1000094021" description="4-hydroxy-tetrahydrodipicolinate reductase">
    <location>
        <begin position="1"/>
        <end position="237"/>
    </location>
</feature>
<feature type="active site" description="Proton donor/acceptor" evidence="1">
    <location>
        <position position="148"/>
    </location>
</feature>
<feature type="active site" description="Proton donor" evidence="1">
    <location>
        <position position="152"/>
    </location>
</feature>
<feature type="binding site" evidence="1">
    <location>
        <begin position="11"/>
        <end position="16"/>
    </location>
    <ligand>
        <name>NAD(+)</name>
        <dbReference type="ChEBI" id="CHEBI:57540"/>
    </ligand>
</feature>
<feature type="binding site" evidence="1">
    <location>
        <begin position="92"/>
        <end position="94"/>
    </location>
    <ligand>
        <name>NAD(+)</name>
        <dbReference type="ChEBI" id="CHEBI:57540"/>
    </ligand>
</feature>
<feature type="binding site" evidence="1">
    <location>
        <begin position="116"/>
        <end position="119"/>
    </location>
    <ligand>
        <name>NAD(+)</name>
        <dbReference type="ChEBI" id="CHEBI:57540"/>
    </ligand>
</feature>
<feature type="binding site" evidence="1">
    <location>
        <position position="149"/>
    </location>
    <ligand>
        <name>(S)-2,3,4,5-tetrahydrodipicolinate</name>
        <dbReference type="ChEBI" id="CHEBI:16845"/>
    </ligand>
</feature>
<feature type="binding site" evidence="1">
    <location>
        <begin position="158"/>
        <end position="159"/>
    </location>
    <ligand>
        <name>(S)-2,3,4,5-tetrahydrodipicolinate</name>
        <dbReference type="ChEBI" id="CHEBI:16845"/>
    </ligand>
</feature>
<name>DAPB_XYLFM</name>
<protein>
    <recommendedName>
        <fullName evidence="1">4-hydroxy-tetrahydrodipicolinate reductase</fullName>
        <shortName evidence="1">HTPA reductase</shortName>
        <ecNumber evidence="1">1.17.1.8</ecNumber>
    </recommendedName>
</protein>
<gene>
    <name evidence="1" type="primary">dapB</name>
    <name type="ordered locus">Xfasm12_0450</name>
</gene>
<organism>
    <name type="scientific">Xylella fastidiosa (strain M12)</name>
    <dbReference type="NCBI Taxonomy" id="405440"/>
    <lineage>
        <taxon>Bacteria</taxon>
        <taxon>Pseudomonadati</taxon>
        <taxon>Pseudomonadota</taxon>
        <taxon>Gammaproteobacteria</taxon>
        <taxon>Lysobacterales</taxon>
        <taxon>Lysobacteraceae</taxon>
        <taxon>Xylella</taxon>
    </lineage>
</organism>
<proteinExistence type="inferred from homology"/>
<reference key="1">
    <citation type="journal article" date="2010" name="J. Bacteriol.">
        <title>Whole genome sequences of two Xylella fastidiosa strains (M12 and M23) causing almond leaf scorch disease in California.</title>
        <authorList>
            <person name="Chen J."/>
            <person name="Xie G."/>
            <person name="Han S."/>
            <person name="Chertkov O."/>
            <person name="Sims D."/>
            <person name="Civerolo E.L."/>
        </authorList>
    </citation>
    <scope>NUCLEOTIDE SEQUENCE [LARGE SCALE GENOMIC DNA]</scope>
    <source>
        <strain>M12</strain>
    </source>
</reference>
<sequence length="237" mass="25045">MDSFLRLLIHGASGRMGQSLLRLASEDPSFQVTAAVVGNAPHRHVSDGVPFFAAAELAAVPAFDVAIDFSLPQGFSSLLALCVARAVPLVSGTTGLDSRQHEALVMAGARIPLVWGSNFSVGMAALVNLVERAGDALSGWDCDIVESHHVHKQDAPSGSALTLGEAVACKGIAPRYTSLRAGDIVGDHLVQFTGLGERIELVHRATNRDVFARGALCVARRVVGRVPGCYRVRDLIM</sequence>
<keyword id="KW-0028">Amino-acid biosynthesis</keyword>
<keyword id="KW-0963">Cytoplasm</keyword>
<keyword id="KW-0220">Diaminopimelate biosynthesis</keyword>
<keyword id="KW-0457">Lysine biosynthesis</keyword>
<keyword id="KW-0520">NAD</keyword>
<keyword id="KW-0521">NADP</keyword>
<keyword id="KW-0560">Oxidoreductase</keyword>
<comment type="function">
    <text evidence="1">Catalyzes the conversion of 4-hydroxy-tetrahydrodipicolinate (HTPA) to tetrahydrodipicolinate.</text>
</comment>
<comment type="catalytic activity">
    <reaction evidence="1">
        <text>(S)-2,3,4,5-tetrahydrodipicolinate + NAD(+) + H2O = (2S,4S)-4-hydroxy-2,3,4,5-tetrahydrodipicolinate + NADH + H(+)</text>
        <dbReference type="Rhea" id="RHEA:35323"/>
        <dbReference type="ChEBI" id="CHEBI:15377"/>
        <dbReference type="ChEBI" id="CHEBI:15378"/>
        <dbReference type="ChEBI" id="CHEBI:16845"/>
        <dbReference type="ChEBI" id="CHEBI:57540"/>
        <dbReference type="ChEBI" id="CHEBI:57945"/>
        <dbReference type="ChEBI" id="CHEBI:67139"/>
        <dbReference type="EC" id="1.17.1.8"/>
    </reaction>
</comment>
<comment type="catalytic activity">
    <reaction evidence="1">
        <text>(S)-2,3,4,5-tetrahydrodipicolinate + NADP(+) + H2O = (2S,4S)-4-hydroxy-2,3,4,5-tetrahydrodipicolinate + NADPH + H(+)</text>
        <dbReference type="Rhea" id="RHEA:35331"/>
        <dbReference type="ChEBI" id="CHEBI:15377"/>
        <dbReference type="ChEBI" id="CHEBI:15378"/>
        <dbReference type="ChEBI" id="CHEBI:16845"/>
        <dbReference type="ChEBI" id="CHEBI:57783"/>
        <dbReference type="ChEBI" id="CHEBI:58349"/>
        <dbReference type="ChEBI" id="CHEBI:67139"/>
        <dbReference type="EC" id="1.17.1.8"/>
    </reaction>
</comment>
<comment type="pathway">
    <text evidence="1">Amino-acid biosynthesis; L-lysine biosynthesis via DAP pathway; (S)-tetrahydrodipicolinate from L-aspartate: step 4/4.</text>
</comment>
<comment type="subcellular location">
    <subcellularLocation>
        <location evidence="1">Cytoplasm</location>
    </subcellularLocation>
</comment>
<comment type="similarity">
    <text evidence="1">Belongs to the DapB family.</text>
</comment>
<comment type="caution">
    <text evidence="2">Was originally thought to be a dihydrodipicolinate reductase (DHDPR), catalyzing the conversion of dihydrodipicolinate to tetrahydrodipicolinate. However, it was shown in E.coli that the substrate of the enzymatic reaction is not dihydrodipicolinate (DHDP) but in fact (2S,4S)-4-hydroxy-2,3,4,5-tetrahydrodipicolinic acid (HTPA), the product released by the DapA-catalyzed reaction.</text>
</comment>
<accession>B0U565</accession>